<comment type="function">
    <text evidence="7 11">Non-reducing polyketide synthase; part of the gene cluster that mediates the biosynthesis of mitorubrinol and mitorubrinic acid, two virulence factors that improve T.marneffei intracellular survival in macrophages (PubMed:23094121). The two polyketide synthases pks12 and pks11 are probably responsible for sequential use in the biosynthesis of mitorubrinol and mitorubrinic acid. The first part of the biosynthesis is probably catalyzed by pks12, which synthesized orsellinic acid. This tetraketide is then used as a starter unit for pks11, which possesses a SAT domain, in the second part of the biosynthesis. Pks11, contains a methyltransferase domain, also served that methylates the products, using a methyl group from S-adenosylmethionine (Probable).</text>
</comment>
<comment type="cofactor">
    <cofactor evidence="2">
        <name>pantetheine 4'-phosphate</name>
        <dbReference type="ChEBI" id="CHEBI:47942"/>
    </cofactor>
    <text evidence="2">Binds 1 phosphopantetheine covalently.</text>
</comment>
<comment type="pathway">
    <text evidence="7">Secondary metabolite biosynthesis.</text>
</comment>
<comment type="domain">
    <text evidence="10">Multidomain protein; including a starter unit:ACP transacylase (SAT) that selects the starter unit; a ketosynthase (KS) that catalyzes repeated decarboxylative condensation to elongate the polyketide backbone; a malonyl-CoA:ACP transacylase (MAT) that selects and transfers the extender unit malonyl-CoA; a product template (PT) domain that controls the immediate cyclization regioselectivity of the reactive polyketide backbone; and an acyl-carrier protein (ACP) that serves as the tether of the growing and completed polyketide via its phosphopantetheinyl arm.</text>
</comment>
<comment type="domain">
    <text evidence="1">The release of the polyketide chain from the non-reducing polyketide synthase is mediated by the thioesterase (TE) domain localized at the C-ter of the protein.</text>
</comment>
<comment type="disruption phenotype">
    <text evidence="7">Leads to the loss of the yellow composed of mitorubrinic acid and mitorubrinol (PubMed:23094121). Increases the survival of mice challenged with T.marneffei and decreases decrease survival of T.marneffei in both J774 and THP1 macrophages (PubMed:23094121).</text>
</comment>
<organism>
    <name type="scientific">Talaromyces marneffei (strain ATCC 18224 / CBS 334.59 / QM 7333)</name>
    <name type="common">Penicillium marneffei</name>
    <dbReference type="NCBI Taxonomy" id="441960"/>
    <lineage>
        <taxon>Eukaryota</taxon>
        <taxon>Fungi</taxon>
        <taxon>Dikarya</taxon>
        <taxon>Ascomycota</taxon>
        <taxon>Pezizomycotina</taxon>
        <taxon>Eurotiomycetes</taxon>
        <taxon>Eurotiomycetidae</taxon>
        <taxon>Eurotiales</taxon>
        <taxon>Trichocomaceae</taxon>
        <taxon>Talaromyces</taxon>
        <taxon>Talaromyces sect. Talaromyces</taxon>
    </lineage>
</organism>
<accession>B6QK81</accession>
<keyword id="KW-0489">Methyltransferase</keyword>
<keyword id="KW-0511">Multifunctional enzyme</keyword>
<keyword id="KW-0596">Phosphopantetheine</keyword>
<keyword id="KW-0597">Phosphoprotein</keyword>
<keyword id="KW-1185">Reference proteome</keyword>
<keyword id="KW-0808">Transferase</keyword>
<keyword id="KW-0843">Virulence</keyword>
<sequence length="1806" mass="197912">MTQGPRYIRHFHDWIAATESPSTSTEMQWTDTMSGMISLPLLTIMQIVQYFQYLETREITHSQFVEEIRIGGAQGYCGGLLPAAAIAASRNEDEVVHNAGIALRLALAIGAYAELGDDENIPGPTTVVLRTKYSGQAEEIVSKFPGTYISAITDPETISIVGPVNVVEELRAYAEGQGIKATKLHLRGKVHNPENKDLCKEFINLCHKYPSMLMLPTAASLQTSLRSNKTGKELRSSATTASLSIEVLENTLANKCEWYNLLNGMAKDLDAISRTEKEHTFALFGTGRKNCVPTMPFEEKQLRISKLDIVTYVEKHDIPREGRTLDQYPENAIAIVGAGCRLPGANSIDELWEILSAGSSRVEKLRSSRFDLSTVSRGSVGPDAKQTAKRELYGNFLDDVESFDSNFFGISPREAMYMDPQQRLLLETAYEALDGSGYLRTHRRGDFDNVGCFIGASYTEYLENTSSYNPTAYTATGTIRAFQSGRISYHFGWSGPSEVIDTACSASLVAVNRACKAIQSGECPMALAGGVNIITGVNNYFDLGKAGFLSTTGQCKPFDETADGYCRADGVGLVALKSLRQAVADGNNVMGVIMGVGTNQGGLSPAITVPYYRAQISLFKNVLNQSGLKSGQISYVEAHGTGTQVGDPIEISSVREVFGGSDRSEFVNMGSLKANVGHSETAAGIGSLMKVLAMLKHGKIPPLAGFKSLNPKIPALEPDYLRIPTELQDWNSSFRAACVNSYGAAGSNSALICGEAPIVTAMTDVLPTDTNMHETSHLQYPLFLSATNNFTLKANASKLAQYVLKNQPRVADVAYTLYHRRKHHRVQWTGLAHDLESLVRSLDKIEEGLEVPASPKSVVLAFSGQSKQTIGLDPSWYVSFPRLRHYIDLCNKIVIRLGYSTILPAVFATDPVEDVVALQCGTFAFQYACAKCWIDSGLEVKAAVGHSFGELTAMAVTETLSLEDALHLVAARATLVQTKWGSERGTMLAIEATLDTTRQIITVVNENIEIACYNGQKSHVLVGTERSIGQVEHLIATDNRFKGTRNTRVKTSHGFHSVFTEPILPELDEIAQKLEFNAPSIPLETSTEKPINEGEHAVEPSRIVQHTRTPVYFGDAISRLEERLGPCIWLEAGSDSPIIPMVKRATHNPSQHTFLGLKAKDIARPIDVIPQASLTLWQEGMSVSCFDGFYSHPPNGVTSNVFNHIWLPPYQFQRTRHWLQYMDLVTEERKTVDERLRSAGAVGTIASQPQTPPLKLVTARSRDSESWSSLEFAIHSETSRFTDIVSAHAVRDQPLCPASMYMECVVMAAQMVEPSVSVKSLSFQNLSFQGALGINYNRDVSLLMEGDGEYLAWNFTVRSTGKESKGRPTTHAKGRFSVTSHIDFQLYERMLADRMNEILVHPQSERLMAGRAYTLFSRVVNYAESLRGISEITILNNRHAVAEVCRPKVSVSSSESTAVAVCDTVTLDTFIQVVGLLINSSETCPVDEVFIATGIDSIIMQDCDFSDPQHDTWKVYAMATTRSESHVAGDMFVFTKDGKLIFTGSGVQFSRFPIAKLEKVLEGIGMNSAPRSPIGNDGIGKGVTAPPSPTTQFHMNGHAKSTPNRHGLRVRTTVEMDEQTLVAQDSVSRRPSALKSAMIRNDSNLGTLGLDSLSKLEFVNQLRAQLGNEISPTQDLSQIADLYNKLFAHSSTTNSRSAHIDHVHKIELDGPSSPTAVNSPVTAGDSQSKLRIRQRILELITENSGESVSTIKDEVSLQDVGIDSLSVIELKESFEDAFSVQFGDWDFGLHLTVRELVDYVVISSNV</sequence>
<proteinExistence type="inferred from homology"/>
<name>PKS12_TALMQ</name>
<protein>
    <recommendedName>
        <fullName evidence="8">Non-reducing polyketide synthase pks12</fullName>
        <shortName evidence="8">NR-PKS pks12</shortName>
        <ecNumber evidence="11">2.3.1.-</ecNumber>
    </recommendedName>
    <alternativeName>
        <fullName evidence="9">Mitorubrinol and mitorubrinic acid biosynthesis cluster protein pks12</fullName>
    </alternativeName>
</protein>
<evidence type="ECO:0000250" key="1">
    <source>
        <dbReference type="UniProtKB" id="Q5ATJ7"/>
    </source>
</evidence>
<evidence type="ECO:0000255" key="2"/>
<evidence type="ECO:0000255" key="3">
    <source>
        <dbReference type="PROSITE-ProRule" id="PRU00258"/>
    </source>
</evidence>
<evidence type="ECO:0000255" key="4">
    <source>
        <dbReference type="PROSITE-ProRule" id="PRU01348"/>
    </source>
</evidence>
<evidence type="ECO:0000255" key="5">
    <source>
        <dbReference type="PROSITE-ProRule" id="PRU01363"/>
    </source>
</evidence>
<evidence type="ECO:0000255" key="6">
    <source>
        <dbReference type="PROSITE-ProRule" id="PRU10022"/>
    </source>
</evidence>
<evidence type="ECO:0000269" key="7">
    <source>
    </source>
</evidence>
<evidence type="ECO:0000303" key="8">
    <source>
    </source>
</evidence>
<evidence type="ECO:0000303" key="9">
    <source>
    </source>
</evidence>
<evidence type="ECO:0000305" key="10">
    <source>
    </source>
</evidence>
<evidence type="ECO:0000305" key="11">
    <source>
    </source>
</evidence>
<reference key="1">
    <citation type="journal article" date="2015" name="Genome Announc.">
        <title>Genome sequence of the AIDS-associated pathogen Penicillium marneffei (ATCC18224) and its near taxonomic relative Talaromyces stipitatus (ATCC10500).</title>
        <authorList>
            <person name="Nierman W.C."/>
            <person name="Fedorova-Abrams N.D."/>
            <person name="Andrianopoulos A."/>
        </authorList>
    </citation>
    <scope>NUCLEOTIDE SEQUENCE [LARGE SCALE GENOMIC DNA]</scope>
    <source>
        <strain>ATCC 18224 / CBS 334.59 / QM 7333</strain>
    </source>
</reference>
<reference key="2">
    <citation type="journal article" date="2010" name="FEBS J.">
        <title>High diversity of polyketide synthase genes and the melanin biosynthesis gene cluster in Penicillium marneffei.</title>
        <authorList>
            <person name="Woo P.C."/>
            <person name="Tam E.W."/>
            <person name="Chong K.T."/>
            <person name="Cai J.J."/>
            <person name="Tung E.T."/>
            <person name="Ngan A.H."/>
            <person name="Lau S.K."/>
            <person name="Yuen K.Y."/>
        </authorList>
    </citation>
    <scope>IDENTIFICATION</scope>
    <scope>DOMAIN</scope>
</reference>
<reference key="3">
    <citation type="journal article" date="2012" name="PLoS Negl. Trop. Dis.">
        <title>First discovery of two polyketide synthase genes for mitorubrinic acid and mitorubrinol yellow pigment biosynthesis and implications in virulence of Penicillium marneffei.</title>
        <authorList>
            <person name="Woo P.C."/>
            <person name="Lam C.W."/>
            <person name="Tam E.W."/>
            <person name="Leung C.K."/>
            <person name="Wong S.S."/>
            <person name="Lau S.K."/>
            <person name="Yuen K.Y."/>
        </authorList>
    </citation>
    <scope>FUNCTION</scope>
    <scope>DISRUPTION PHENOTYPE</scope>
    <scope>PATHWAY</scope>
</reference>
<feature type="chain" id="PRO_0000460606" description="Non-reducing polyketide synthase pks12">
    <location>
        <begin position="1"/>
        <end position="1806"/>
    </location>
</feature>
<feature type="domain" description="Starter acyltransferase (SAT)" evidence="2">
    <location>
        <begin position="30"/>
        <end position="191"/>
    </location>
</feature>
<feature type="domain" description="Ketosynthase family 3 (KS3)" evidence="4">
    <location>
        <begin position="330"/>
        <end position="755"/>
    </location>
</feature>
<feature type="domain" description="Malonyl-CoA:ACP transacylase (MAT)" evidence="2">
    <location>
        <begin position="862"/>
        <end position="1147"/>
    </location>
</feature>
<feature type="domain" description="PKS/mFAS DH" evidence="5">
    <location>
        <begin position="1249"/>
        <end position="1558"/>
    </location>
</feature>
<feature type="domain" description="Carrier" evidence="3">
    <location>
        <begin position="1727"/>
        <end position="1804"/>
    </location>
</feature>
<feature type="region of interest" description="Malonyl-CoA:ACP transacylase (MAT) domain" evidence="1 2">
    <location>
        <begin position="860"/>
        <end position="1156"/>
    </location>
</feature>
<feature type="region of interest" description="Product template (PT) domain" evidence="1 2">
    <location>
        <begin position="1249"/>
        <end position="1558"/>
    </location>
</feature>
<feature type="region of interest" description="N-terminal hotdog fold" evidence="5">
    <location>
        <begin position="1249"/>
        <end position="1383"/>
    </location>
</feature>
<feature type="region of interest" description="C-terminal hotdog fold" evidence="5">
    <location>
        <begin position="1404"/>
        <end position="1558"/>
    </location>
</feature>
<feature type="active site" description="For beta-ketoacyl synthase activity" evidence="4">
    <location>
        <position position="504"/>
    </location>
</feature>
<feature type="active site" description="For beta-ketoacyl synthase activity" evidence="4">
    <location>
        <position position="639"/>
    </location>
</feature>
<feature type="active site" description="For beta-ketoacyl synthase activity" evidence="4">
    <location>
        <position position="678"/>
    </location>
</feature>
<feature type="active site" description="For acyl/malonyl transferase activity" evidence="6">
    <location>
        <position position="947"/>
    </location>
</feature>
<feature type="active site" description="Proton acceptor; for dehydratase activity" evidence="5">
    <location>
        <position position="1288"/>
    </location>
</feature>
<feature type="active site" description="Proton donor; for dehydratase activity" evidence="5">
    <location>
        <position position="1468"/>
    </location>
</feature>
<feature type="modified residue" description="O-(pantetheine 4'-phosphoryl)serine" evidence="3">
    <location>
        <position position="1764"/>
    </location>
</feature>
<dbReference type="EC" id="2.3.1.-" evidence="11"/>
<dbReference type="EMBL" id="DS995902">
    <property type="protein sequence ID" value="EEA23575.1"/>
    <property type="molecule type" value="Genomic_DNA"/>
</dbReference>
<dbReference type="RefSeq" id="XP_002149742.1">
    <property type="nucleotide sequence ID" value="XM_002149706.1"/>
</dbReference>
<dbReference type="SMR" id="B6QK81"/>
<dbReference type="STRING" id="441960.B6QK81"/>
<dbReference type="VEuPathDB" id="FungiDB:PMAA_101600"/>
<dbReference type="HOGENOM" id="CLU_000022_6_3_1"/>
<dbReference type="OrthoDB" id="6622at28568"/>
<dbReference type="PhylomeDB" id="B6QK81"/>
<dbReference type="Proteomes" id="UP000001294">
    <property type="component" value="Unassembled WGS sequence"/>
</dbReference>
<dbReference type="GO" id="GO:0004315">
    <property type="term" value="F:3-oxoacyl-[acyl-carrier-protein] synthase activity"/>
    <property type="evidence" value="ECO:0007669"/>
    <property type="project" value="InterPro"/>
</dbReference>
<dbReference type="GO" id="GO:0004312">
    <property type="term" value="F:fatty acid synthase activity"/>
    <property type="evidence" value="ECO:0007669"/>
    <property type="project" value="TreeGrafter"/>
</dbReference>
<dbReference type="GO" id="GO:0008168">
    <property type="term" value="F:methyltransferase activity"/>
    <property type="evidence" value="ECO:0007669"/>
    <property type="project" value="UniProtKB-KW"/>
</dbReference>
<dbReference type="GO" id="GO:0006633">
    <property type="term" value="P:fatty acid biosynthetic process"/>
    <property type="evidence" value="ECO:0007669"/>
    <property type="project" value="InterPro"/>
</dbReference>
<dbReference type="GO" id="GO:0032259">
    <property type="term" value="P:methylation"/>
    <property type="evidence" value="ECO:0007669"/>
    <property type="project" value="UniProtKB-KW"/>
</dbReference>
<dbReference type="GO" id="GO:0044550">
    <property type="term" value="P:secondary metabolite biosynthetic process"/>
    <property type="evidence" value="ECO:0007669"/>
    <property type="project" value="UniProtKB-ARBA"/>
</dbReference>
<dbReference type="CDD" id="cd00833">
    <property type="entry name" value="PKS"/>
    <property type="match status" value="1"/>
</dbReference>
<dbReference type="Gene3D" id="3.30.70.3290">
    <property type="match status" value="1"/>
</dbReference>
<dbReference type="Gene3D" id="3.40.47.10">
    <property type="match status" value="1"/>
</dbReference>
<dbReference type="Gene3D" id="1.10.1200.10">
    <property type="entry name" value="ACP-like"/>
    <property type="match status" value="2"/>
</dbReference>
<dbReference type="Gene3D" id="3.40.366.10">
    <property type="entry name" value="Malonyl-Coenzyme A Acyl Carrier Protein, domain 2"/>
    <property type="match status" value="2"/>
</dbReference>
<dbReference type="Gene3D" id="3.10.129.110">
    <property type="entry name" value="Polyketide synthase dehydratase"/>
    <property type="match status" value="1"/>
</dbReference>
<dbReference type="InterPro" id="IPR001227">
    <property type="entry name" value="Ac_transferase_dom_sf"/>
</dbReference>
<dbReference type="InterPro" id="IPR036736">
    <property type="entry name" value="ACP-like_sf"/>
</dbReference>
<dbReference type="InterPro" id="IPR014043">
    <property type="entry name" value="Acyl_transferase_dom"/>
</dbReference>
<dbReference type="InterPro" id="IPR016035">
    <property type="entry name" value="Acyl_Trfase/lysoPLipase"/>
</dbReference>
<dbReference type="InterPro" id="IPR018201">
    <property type="entry name" value="Ketoacyl_synth_AS"/>
</dbReference>
<dbReference type="InterPro" id="IPR014031">
    <property type="entry name" value="Ketoacyl_synth_C"/>
</dbReference>
<dbReference type="InterPro" id="IPR014030">
    <property type="entry name" value="Ketoacyl_synth_N"/>
</dbReference>
<dbReference type="InterPro" id="IPR016036">
    <property type="entry name" value="Malonyl_transacylase_ACP-bd"/>
</dbReference>
<dbReference type="InterPro" id="IPR020841">
    <property type="entry name" value="PKS_Beta-ketoAc_synthase_dom"/>
</dbReference>
<dbReference type="InterPro" id="IPR042104">
    <property type="entry name" value="PKS_dehydratase_sf"/>
</dbReference>
<dbReference type="InterPro" id="IPR049551">
    <property type="entry name" value="PKS_DH_C"/>
</dbReference>
<dbReference type="InterPro" id="IPR049900">
    <property type="entry name" value="PKS_mFAS_DH"/>
</dbReference>
<dbReference type="InterPro" id="IPR050091">
    <property type="entry name" value="PKS_NRPS_Biosynth_Enz"/>
</dbReference>
<dbReference type="InterPro" id="IPR009081">
    <property type="entry name" value="PP-bd_ACP"/>
</dbReference>
<dbReference type="InterPro" id="IPR032088">
    <property type="entry name" value="SAT"/>
</dbReference>
<dbReference type="InterPro" id="IPR016039">
    <property type="entry name" value="Thiolase-like"/>
</dbReference>
<dbReference type="PANTHER" id="PTHR43775">
    <property type="entry name" value="FATTY ACID SYNTHASE"/>
    <property type="match status" value="1"/>
</dbReference>
<dbReference type="PANTHER" id="PTHR43775:SF21">
    <property type="entry name" value="NON-REDUCING POLYKETIDE SYNTHASE AUSA-RELATED"/>
    <property type="match status" value="1"/>
</dbReference>
<dbReference type="Pfam" id="PF00698">
    <property type="entry name" value="Acyl_transf_1"/>
    <property type="match status" value="1"/>
</dbReference>
<dbReference type="Pfam" id="PF22621">
    <property type="entry name" value="CurL-like_PKS_C"/>
    <property type="match status" value="1"/>
</dbReference>
<dbReference type="Pfam" id="PF00109">
    <property type="entry name" value="ketoacyl-synt"/>
    <property type="match status" value="1"/>
</dbReference>
<dbReference type="Pfam" id="PF02801">
    <property type="entry name" value="Ketoacyl-synt_C"/>
    <property type="match status" value="1"/>
</dbReference>
<dbReference type="Pfam" id="PF00550">
    <property type="entry name" value="PP-binding"/>
    <property type="match status" value="1"/>
</dbReference>
<dbReference type="Pfam" id="PF14765">
    <property type="entry name" value="PS-DH"/>
    <property type="match status" value="1"/>
</dbReference>
<dbReference type="Pfam" id="PF16073">
    <property type="entry name" value="SAT"/>
    <property type="match status" value="1"/>
</dbReference>
<dbReference type="SMART" id="SM00827">
    <property type="entry name" value="PKS_AT"/>
    <property type="match status" value="1"/>
</dbReference>
<dbReference type="SMART" id="SM00825">
    <property type="entry name" value="PKS_KS"/>
    <property type="match status" value="1"/>
</dbReference>
<dbReference type="SUPFAM" id="SSF47336">
    <property type="entry name" value="ACP-like"/>
    <property type="match status" value="2"/>
</dbReference>
<dbReference type="SUPFAM" id="SSF52151">
    <property type="entry name" value="FabD/lysophospholipase-like"/>
    <property type="match status" value="1"/>
</dbReference>
<dbReference type="SUPFAM" id="SSF55048">
    <property type="entry name" value="Probable ACP-binding domain of malonyl-CoA ACP transacylase"/>
    <property type="match status" value="1"/>
</dbReference>
<dbReference type="SUPFAM" id="SSF53901">
    <property type="entry name" value="Thiolase-like"/>
    <property type="match status" value="1"/>
</dbReference>
<dbReference type="PROSITE" id="PS50075">
    <property type="entry name" value="CARRIER"/>
    <property type="match status" value="1"/>
</dbReference>
<dbReference type="PROSITE" id="PS00606">
    <property type="entry name" value="KS3_1"/>
    <property type="match status" value="1"/>
</dbReference>
<dbReference type="PROSITE" id="PS52004">
    <property type="entry name" value="KS3_2"/>
    <property type="match status" value="1"/>
</dbReference>
<dbReference type="PROSITE" id="PS52019">
    <property type="entry name" value="PKS_MFAS_DH"/>
    <property type="match status" value="1"/>
</dbReference>
<gene>
    <name evidence="8" type="primary">pks12</name>
    <name type="ORF">PMAA_101600</name>
</gene>